<name>Y2561_CLOBH</name>
<keyword id="KW-1185">Reference proteome</keyword>
<organism>
    <name type="scientific">Clostridium botulinum (strain Hall / ATCC 3502 / NCTC 13319 / Type A)</name>
    <dbReference type="NCBI Taxonomy" id="441771"/>
    <lineage>
        <taxon>Bacteria</taxon>
        <taxon>Bacillati</taxon>
        <taxon>Bacillota</taxon>
        <taxon>Clostridia</taxon>
        <taxon>Eubacteriales</taxon>
        <taxon>Clostridiaceae</taxon>
        <taxon>Clostridium</taxon>
    </lineage>
</organism>
<protein>
    <recommendedName>
        <fullName evidence="1">UPF0473 protein CBO2561/CLC_2432</fullName>
    </recommendedName>
</protein>
<reference key="1">
    <citation type="journal article" date="2007" name="Genome Res.">
        <title>Genome sequence of a proteolytic (Group I) Clostridium botulinum strain Hall A and comparative analysis of the clostridial genomes.</title>
        <authorList>
            <person name="Sebaihia M."/>
            <person name="Peck M.W."/>
            <person name="Minton N.P."/>
            <person name="Thomson N.R."/>
            <person name="Holden M.T.G."/>
            <person name="Mitchell W.J."/>
            <person name="Carter A.T."/>
            <person name="Bentley S.D."/>
            <person name="Mason D.R."/>
            <person name="Crossman L."/>
            <person name="Paul C.J."/>
            <person name="Ivens A."/>
            <person name="Wells-Bennik M.H.J."/>
            <person name="Davis I.J."/>
            <person name="Cerdeno-Tarraga A.M."/>
            <person name="Churcher C."/>
            <person name="Quail M.A."/>
            <person name="Chillingworth T."/>
            <person name="Feltwell T."/>
            <person name="Fraser A."/>
            <person name="Goodhead I."/>
            <person name="Hance Z."/>
            <person name="Jagels K."/>
            <person name="Larke N."/>
            <person name="Maddison M."/>
            <person name="Moule S."/>
            <person name="Mungall K."/>
            <person name="Norbertczak H."/>
            <person name="Rabbinowitsch E."/>
            <person name="Sanders M."/>
            <person name="Simmonds M."/>
            <person name="White B."/>
            <person name="Whithead S."/>
            <person name="Parkhill J."/>
        </authorList>
    </citation>
    <scope>NUCLEOTIDE SEQUENCE [LARGE SCALE GENOMIC DNA]</scope>
    <source>
        <strain>Hall / ATCC 3502 / NCTC 13319 / Type A</strain>
    </source>
</reference>
<reference key="2">
    <citation type="journal article" date="2007" name="PLoS ONE">
        <title>Analysis of the neurotoxin complex genes in Clostridium botulinum A1-A4 and B1 strains: BoNT/A3, /Ba4 and /B1 clusters are located within plasmids.</title>
        <authorList>
            <person name="Smith T.J."/>
            <person name="Hill K.K."/>
            <person name="Foley B.T."/>
            <person name="Detter J.C."/>
            <person name="Munk A.C."/>
            <person name="Bruce D.C."/>
            <person name="Doggett N.A."/>
            <person name="Smith L.A."/>
            <person name="Marks J.D."/>
            <person name="Xie G."/>
            <person name="Brettin T.S."/>
        </authorList>
    </citation>
    <scope>NUCLEOTIDE SEQUENCE [LARGE SCALE GENOMIC DNA]</scope>
    <source>
        <strain>Hall / ATCC 3502 / NCTC 13319 / Type A</strain>
    </source>
</reference>
<accession>A5I4Z2</accession>
<accession>A7G658</accession>
<sequence length="84" mass="9654">MDNNVDTITLTDEEGKETEFEVITKLDIEDKEYVVVVPKNEEVDEAIALRIDNNDNGEEVLVPVEEDEEFNMVAEAYELLFSEE</sequence>
<evidence type="ECO:0000255" key="1">
    <source>
        <dbReference type="HAMAP-Rule" id="MF_01448"/>
    </source>
</evidence>
<feature type="chain" id="PRO_1000024468" description="UPF0473 protein CBO2561/CLC_2432">
    <location>
        <begin position="1"/>
        <end position="84"/>
    </location>
</feature>
<gene>
    <name type="ordered locus">CBO2561</name>
    <name type="ordered locus">CLC_2432</name>
</gene>
<comment type="similarity">
    <text evidence="1">Belongs to the UPF0473 family.</text>
</comment>
<dbReference type="EMBL" id="CP000727">
    <property type="protein sequence ID" value="ABS36991.1"/>
    <property type="molecule type" value="Genomic_DNA"/>
</dbReference>
<dbReference type="EMBL" id="AM412317">
    <property type="protein sequence ID" value="CAL84119.1"/>
    <property type="molecule type" value="Genomic_DNA"/>
</dbReference>
<dbReference type="RefSeq" id="WP_011986884.1">
    <property type="nucleotide sequence ID" value="NC_009698.1"/>
</dbReference>
<dbReference type="RefSeq" id="YP_001255057.1">
    <property type="nucleotide sequence ID" value="NC_009495.1"/>
</dbReference>
<dbReference type="RefSeq" id="YP_001388273.1">
    <property type="nucleotide sequence ID" value="NC_009698.1"/>
</dbReference>
<dbReference type="SMR" id="A5I4Z2"/>
<dbReference type="GeneID" id="5186816"/>
<dbReference type="KEGG" id="cbh:CLC_2432"/>
<dbReference type="KEGG" id="cbo:CBO2561"/>
<dbReference type="PATRIC" id="fig|413999.7.peg.2540"/>
<dbReference type="HOGENOM" id="CLU_146610_8_0_9"/>
<dbReference type="PRO" id="PR:A5I4Z2"/>
<dbReference type="Proteomes" id="UP000001986">
    <property type="component" value="Chromosome"/>
</dbReference>
<dbReference type="HAMAP" id="MF_01448">
    <property type="entry name" value="UPF0473"/>
    <property type="match status" value="1"/>
</dbReference>
<dbReference type="InterPro" id="IPR009711">
    <property type="entry name" value="UPF0473"/>
</dbReference>
<dbReference type="PANTHER" id="PTHR40066">
    <property type="entry name" value="UPF0473 PROTEIN CBO2561/CLC_2432"/>
    <property type="match status" value="1"/>
</dbReference>
<dbReference type="PANTHER" id="PTHR40066:SF1">
    <property type="entry name" value="UPF0473 PROTEIN CBO2561_CLC_2432"/>
    <property type="match status" value="1"/>
</dbReference>
<dbReference type="Pfam" id="PF06949">
    <property type="entry name" value="DUF1292"/>
    <property type="match status" value="1"/>
</dbReference>
<proteinExistence type="inferred from homology"/>